<keyword id="KW-0002">3D-structure</keyword>
<keyword id="KW-0007">Acetylation</keyword>
<keyword id="KW-0010">Activator</keyword>
<keyword id="KW-0137">Centromere</keyword>
<keyword id="KW-0156">Chromatin regulator</keyword>
<keyword id="KW-0158">Chromosome</keyword>
<keyword id="KW-0223">Dioxygenase</keyword>
<keyword id="KW-0408">Iron</keyword>
<keyword id="KW-1017">Isopeptide bond</keyword>
<keyword id="KW-0995">Kinetochore</keyword>
<keyword id="KW-0479">Metal-binding</keyword>
<keyword id="KW-0539">Nucleus</keyword>
<keyword id="KW-0560">Oxidoreductase</keyword>
<keyword id="KW-0597">Phosphoprotein</keyword>
<keyword id="KW-1267">Proteomics identification</keyword>
<keyword id="KW-1185">Reference proteome</keyword>
<keyword id="KW-0804">Transcription</keyword>
<keyword id="KW-0805">Transcription regulation</keyword>
<keyword id="KW-0832">Ubl conjugation</keyword>
<keyword id="KW-0862">Zinc</keyword>
<keyword id="KW-0863">Zinc-finger</keyword>
<sequence length="1096" mass="120775">MATVPVYCVCRLPYDVTRFMIECDACKDWFHGSCVGVEEEEAPDIDIYHCPNCEKTHGKSTLKKKRTWHKHGPGQAPDVKPVQNGSQLFIKELRSRTFPSAEDVVARVPGSQLTLGYMEEHGFTEPILVPKKDGLGLAVPAPTFYVSDVENYVGPERSVDVTDVTKQKDCKMKLKEFVDYYYSTNRKRVLNVTNLEFSDTRMSSFVEPPDIVKKLSWVENYWPDDALLAKPKVTKYCLICVKDSYTDFHIDSGGASAWYHVLKGEKTFYLIRPASANISLYERWRSASNHSEMFFADQVDKCYKCIVKQGQTLFIPSGWIYATLTPVDCLAFAGHFLHSLSVEMQMRAYEVERRLKLGSLTQFPNFETACWYMGKHLLEAFKGSHKSGKQLPPHLVQGAKILNGAFRSWTKKQALAEHEDELPEHFKPSQLIKDLAKEIRLSENASKAVRPEVNTVASSDEVCDGDREKEEPPSPIEATPPQSLLEKVSKKKTPKTVKMPKPSKIPKPPKPPKPPRPPKTLKLKDGGKKKGKKSRESASPTIPNLDLLEAHTKEALTKMEPPKKGKATKSVLSVPNKDVVHMQNDVERLEIREQTKSKSEAKWKYKNSKPDSLLKMEEEQKLEKSPLAGNKDNKFSFSFSNKKLLGSKALRPPTSPGVFGALQNFKEDKPKPVRDEYEYVSDDGELKIDEFPIRRKKNAPKRDLSFLLDKKAVLPTPVTKPKLDSAAYKSDDSSDEGSLHIDTDTKPGRNARVKKESGSSAAGILDLLQASEEVGALEYNPSSQPPASPSTQEAIQGMLSMANLQASDSCLQTTWGAGQAKGSSLAAHGARKNGGGSGKSAGKRLLKRAAKNSVDLDDYEEEQDHLDACFKDSDYVYPSLESDEDNPIFKSRSKKRKGSDDAPYSPTARVGPSVPRQDRPVREGTRVASIETGLAAAAAKLSQQEEQKSKKKKSAKRKLTPNTTSPSTSTSISAGTTSTSTTPASTTPASTTPASTSTASSQASQEGSSPEPPPESHSSSLADHEYTAAGTFTGAQAGRTSQPMAPGVFLTQRRPSASSPNNNTAAKGKRTKKGMATAKQRLGKILKIHRNGKLLL</sequence>
<reference key="1">
    <citation type="journal article" date="1999" name="Mamm. Genome">
        <title>PHF2, a novel PHD finger gene located on human chromosome 9q22.</title>
        <authorList>
            <person name="Hasenpusch-Theil K."/>
            <person name="Chadwick B.P."/>
            <person name="Theil T."/>
            <person name="Heath S.K."/>
            <person name="Wilkinson D.G."/>
            <person name="Frischauf A.M."/>
        </authorList>
    </citation>
    <scope>NUCLEOTIDE SEQUENCE [MRNA]</scope>
</reference>
<reference key="2">
    <citation type="journal article" date="1998" name="DNA Res.">
        <title>Prediction of the coding sequences of unidentified human genes. X. The complete sequences of 100 new cDNA clones from brain which can code for large proteins in vitro.</title>
        <authorList>
            <person name="Ishikawa K."/>
            <person name="Nagase T."/>
            <person name="Suyama M."/>
            <person name="Miyajima N."/>
            <person name="Tanaka A."/>
            <person name="Kotani H."/>
            <person name="Nomura N."/>
            <person name="Ohara O."/>
        </authorList>
    </citation>
    <scope>NUCLEOTIDE SEQUENCE [LARGE SCALE MRNA]</scope>
    <source>
        <tissue>Brain</tissue>
    </source>
</reference>
<reference key="3">
    <citation type="journal article" date="2002" name="DNA Res.">
        <title>Construction of expression-ready cDNA clones for KIAA genes: manual curation of 330 KIAA cDNA clones.</title>
        <authorList>
            <person name="Nakajima D."/>
            <person name="Okazaki N."/>
            <person name="Yamakawa H."/>
            <person name="Kikuno R."/>
            <person name="Ohara O."/>
            <person name="Nagase T."/>
        </authorList>
    </citation>
    <scope>SEQUENCE REVISION</scope>
</reference>
<reference key="4">
    <citation type="journal article" date="2004" name="Nature">
        <title>DNA sequence and analysis of human chromosome 9.</title>
        <authorList>
            <person name="Humphray S.J."/>
            <person name="Oliver K."/>
            <person name="Hunt A.R."/>
            <person name="Plumb R.W."/>
            <person name="Loveland J.E."/>
            <person name="Howe K.L."/>
            <person name="Andrews T.D."/>
            <person name="Searle S."/>
            <person name="Hunt S.E."/>
            <person name="Scott C.E."/>
            <person name="Jones M.C."/>
            <person name="Ainscough R."/>
            <person name="Almeida J.P."/>
            <person name="Ambrose K.D."/>
            <person name="Ashwell R.I.S."/>
            <person name="Babbage A.K."/>
            <person name="Babbage S."/>
            <person name="Bagguley C.L."/>
            <person name="Bailey J."/>
            <person name="Banerjee R."/>
            <person name="Barker D.J."/>
            <person name="Barlow K.F."/>
            <person name="Bates K."/>
            <person name="Beasley H."/>
            <person name="Beasley O."/>
            <person name="Bird C.P."/>
            <person name="Bray-Allen S."/>
            <person name="Brown A.J."/>
            <person name="Brown J.Y."/>
            <person name="Burford D."/>
            <person name="Burrill W."/>
            <person name="Burton J."/>
            <person name="Carder C."/>
            <person name="Carter N.P."/>
            <person name="Chapman J.C."/>
            <person name="Chen Y."/>
            <person name="Clarke G."/>
            <person name="Clark S.Y."/>
            <person name="Clee C.M."/>
            <person name="Clegg S."/>
            <person name="Collier R.E."/>
            <person name="Corby N."/>
            <person name="Crosier M."/>
            <person name="Cummings A.T."/>
            <person name="Davies J."/>
            <person name="Dhami P."/>
            <person name="Dunn M."/>
            <person name="Dutta I."/>
            <person name="Dyer L.W."/>
            <person name="Earthrowl M.E."/>
            <person name="Faulkner L."/>
            <person name="Fleming C.J."/>
            <person name="Frankish A."/>
            <person name="Frankland J.A."/>
            <person name="French L."/>
            <person name="Fricker D.G."/>
            <person name="Garner P."/>
            <person name="Garnett J."/>
            <person name="Ghori J."/>
            <person name="Gilbert J.G.R."/>
            <person name="Glison C."/>
            <person name="Grafham D.V."/>
            <person name="Gribble S."/>
            <person name="Griffiths C."/>
            <person name="Griffiths-Jones S."/>
            <person name="Grocock R."/>
            <person name="Guy J."/>
            <person name="Hall R.E."/>
            <person name="Hammond S."/>
            <person name="Harley J.L."/>
            <person name="Harrison E.S.I."/>
            <person name="Hart E.A."/>
            <person name="Heath P.D."/>
            <person name="Henderson C.D."/>
            <person name="Hopkins B.L."/>
            <person name="Howard P.J."/>
            <person name="Howden P.J."/>
            <person name="Huckle E."/>
            <person name="Johnson C."/>
            <person name="Johnson D."/>
            <person name="Joy A.A."/>
            <person name="Kay M."/>
            <person name="Keenan S."/>
            <person name="Kershaw J.K."/>
            <person name="Kimberley A.M."/>
            <person name="King A."/>
            <person name="Knights A."/>
            <person name="Laird G.K."/>
            <person name="Langford C."/>
            <person name="Lawlor S."/>
            <person name="Leongamornlert D.A."/>
            <person name="Leversha M."/>
            <person name="Lloyd C."/>
            <person name="Lloyd D.M."/>
            <person name="Lovell J."/>
            <person name="Martin S."/>
            <person name="Mashreghi-Mohammadi M."/>
            <person name="Matthews L."/>
            <person name="McLaren S."/>
            <person name="McLay K.E."/>
            <person name="McMurray A."/>
            <person name="Milne S."/>
            <person name="Nickerson T."/>
            <person name="Nisbett J."/>
            <person name="Nordsiek G."/>
            <person name="Pearce A.V."/>
            <person name="Peck A.I."/>
            <person name="Porter K.M."/>
            <person name="Pandian R."/>
            <person name="Pelan S."/>
            <person name="Phillimore B."/>
            <person name="Povey S."/>
            <person name="Ramsey Y."/>
            <person name="Rand V."/>
            <person name="Scharfe M."/>
            <person name="Sehra H.K."/>
            <person name="Shownkeen R."/>
            <person name="Sims S.K."/>
            <person name="Skuce C.D."/>
            <person name="Smith M."/>
            <person name="Steward C.A."/>
            <person name="Swarbreck D."/>
            <person name="Sycamore N."/>
            <person name="Tester J."/>
            <person name="Thorpe A."/>
            <person name="Tracey A."/>
            <person name="Tromans A."/>
            <person name="Thomas D.W."/>
            <person name="Wall M."/>
            <person name="Wallis J.M."/>
            <person name="West A.P."/>
            <person name="Whitehead S.L."/>
            <person name="Willey D.L."/>
            <person name="Williams S.A."/>
            <person name="Wilming L."/>
            <person name="Wray P.W."/>
            <person name="Young L."/>
            <person name="Ashurst J.L."/>
            <person name="Coulson A."/>
            <person name="Blocker H."/>
            <person name="Durbin R.M."/>
            <person name="Sulston J.E."/>
            <person name="Hubbard T."/>
            <person name="Jackson M.J."/>
            <person name="Bentley D.R."/>
            <person name="Beck S."/>
            <person name="Rogers J."/>
            <person name="Dunham I."/>
        </authorList>
    </citation>
    <scope>NUCLEOTIDE SEQUENCE [LARGE SCALE GENOMIC DNA]</scope>
</reference>
<reference key="5">
    <citation type="submission" date="2005-07" db="EMBL/GenBank/DDBJ databases">
        <authorList>
            <person name="Mural R.J."/>
            <person name="Istrail S."/>
            <person name="Sutton G.G."/>
            <person name="Florea L."/>
            <person name="Halpern A.L."/>
            <person name="Mobarry C.M."/>
            <person name="Lippert R."/>
            <person name="Walenz B."/>
            <person name="Shatkay H."/>
            <person name="Dew I."/>
            <person name="Miller J.R."/>
            <person name="Flanigan M.J."/>
            <person name="Edwards N.J."/>
            <person name="Bolanos R."/>
            <person name="Fasulo D."/>
            <person name="Halldorsson B.V."/>
            <person name="Hannenhalli S."/>
            <person name="Turner R."/>
            <person name="Yooseph S."/>
            <person name="Lu F."/>
            <person name="Nusskern D.R."/>
            <person name="Shue B.C."/>
            <person name="Zheng X.H."/>
            <person name="Zhong F."/>
            <person name="Delcher A.L."/>
            <person name="Huson D.H."/>
            <person name="Kravitz S.A."/>
            <person name="Mouchard L."/>
            <person name="Reinert K."/>
            <person name="Remington K.A."/>
            <person name="Clark A.G."/>
            <person name="Waterman M.S."/>
            <person name="Eichler E.E."/>
            <person name="Adams M.D."/>
            <person name="Hunkapiller M.W."/>
            <person name="Myers E.W."/>
            <person name="Venter J.C."/>
        </authorList>
    </citation>
    <scope>NUCLEOTIDE SEQUENCE [LARGE SCALE GENOMIC DNA]</scope>
</reference>
<reference key="6">
    <citation type="journal article" date="2007" name="BMC Genomics">
        <title>The full-ORF clone resource of the German cDNA consortium.</title>
        <authorList>
            <person name="Bechtel S."/>
            <person name="Rosenfelder H."/>
            <person name="Duda A."/>
            <person name="Schmidt C.P."/>
            <person name="Ernst U."/>
            <person name="Wellenreuther R."/>
            <person name="Mehrle A."/>
            <person name="Schuster C."/>
            <person name="Bahr A."/>
            <person name="Bloecker H."/>
            <person name="Heubner D."/>
            <person name="Hoerlein A."/>
            <person name="Michel G."/>
            <person name="Wedler H."/>
            <person name="Koehrer K."/>
            <person name="Ottenwaelder B."/>
            <person name="Poustka A."/>
            <person name="Wiemann S."/>
            <person name="Schupp I."/>
        </authorList>
    </citation>
    <scope>NUCLEOTIDE SEQUENCE [LARGE SCALE MRNA] OF 2-1096</scope>
    <source>
        <tissue>Amygdala</tissue>
    </source>
</reference>
<reference key="7">
    <citation type="journal article" date="2006" name="Cell">
        <title>Global, in vivo, and site-specific phosphorylation dynamics in signaling networks.</title>
        <authorList>
            <person name="Olsen J.V."/>
            <person name="Blagoev B."/>
            <person name="Gnad F."/>
            <person name="Macek B."/>
            <person name="Kumar C."/>
            <person name="Mortensen P."/>
            <person name="Mann M."/>
        </authorList>
    </citation>
    <scope>IDENTIFICATION BY MASS SPECTROMETRY [LARGE SCALE ANALYSIS]</scope>
    <source>
        <tissue>Cervix carcinoma</tissue>
    </source>
</reference>
<reference key="8">
    <citation type="journal article" date="2008" name="Proc. Natl. Acad. Sci. U.S.A.">
        <title>A quantitative atlas of mitotic phosphorylation.</title>
        <authorList>
            <person name="Dephoure N."/>
            <person name="Zhou C."/>
            <person name="Villen J."/>
            <person name="Beausoleil S.A."/>
            <person name="Bakalarski C.E."/>
            <person name="Elledge S.J."/>
            <person name="Gygi S.P."/>
        </authorList>
    </citation>
    <scope>PHOSPHORYLATION [LARGE SCALE ANALYSIS] AT SER-539 AND SER-882</scope>
    <scope>IDENTIFICATION BY MASS SPECTROMETRY [LARGE SCALE ANALYSIS]</scope>
    <source>
        <tissue>Cervix carcinoma</tissue>
    </source>
</reference>
<reference key="9">
    <citation type="journal article" date="2009" name="Anal. Chem.">
        <title>Lys-N and trypsin cover complementary parts of the phosphoproteome in a refined SCX-based approach.</title>
        <authorList>
            <person name="Gauci S."/>
            <person name="Helbig A.O."/>
            <person name="Slijper M."/>
            <person name="Krijgsveld J."/>
            <person name="Heck A.J."/>
            <person name="Mohammed S."/>
        </authorList>
    </citation>
    <scope>IDENTIFICATION BY MASS SPECTROMETRY [LARGE SCALE ANALYSIS]</scope>
</reference>
<reference key="10">
    <citation type="journal article" date="2009" name="Sci. Signal.">
        <title>Quantitative phosphoproteomic analysis of T cell receptor signaling reveals system-wide modulation of protein-protein interactions.</title>
        <authorList>
            <person name="Mayya V."/>
            <person name="Lundgren D.H."/>
            <person name="Hwang S.-I."/>
            <person name="Rezaul K."/>
            <person name="Wu L."/>
            <person name="Eng J.K."/>
            <person name="Rodionov V."/>
            <person name="Han D.K."/>
        </authorList>
    </citation>
    <scope>PHOSPHORYLATION [LARGE SCALE ANALYSIS] AT SER-882</scope>
    <scope>IDENTIFICATION BY MASS SPECTROMETRY [LARGE SCALE ANALYSIS]</scope>
    <source>
        <tissue>Leukemic T-cell</tissue>
    </source>
</reference>
<reference key="11">
    <citation type="journal article" date="2010" name="Cell">
        <title>The protein composition of mitotic chromosomes determined using multiclassifier combinatorial proteomics.</title>
        <authorList>
            <person name="Ohta S."/>
            <person name="Bukowski-Wills J.C."/>
            <person name="Sanchez-Pulido L."/>
            <person name="Alves Fde L."/>
            <person name="Wood L."/>
            <person name="Chen Z.A."/>
            <person name="Platani M."/>
            <person name="Fischer L."/>
            <person name="Hudson D.F."/>
            <person name="Ponting C.P."/>
            <person name="Fukagawa T."/>
            <person name="Earnshaw W.C."/>
            <person name="Rappsilber J."/>
        </authorList>
    </citation>
    <scope>SUBCELLULAR LOCATION</scope>
</reference>
<reference key="12">
    <citation type="journal article" date="2010" name="Sci. Signal.">
        <title>Quantitative phosphoproteomics reveals widespread full phosphorylation site occupancy during mitosis.</title>
        <authorList>
            <person name="Olsen J.V."/>
            <person name="Vermeulen M."/>
            <person name="Santamaria A."/>
            <person name="Kumar C."/>
            <person name="Miller M.L."/>
            <person name="Jensen L.J."/>
            <person name="Gnad F."/>
            <person name="Cox J."/>
            <person name="Jensen T.S."/>
            <person name="Nigg E.A."/>
            <person name="Brunak S."/>
            <person name="Mann M."/>
        </authorList>
    </citation>
    <scope>PHOSPHORYLATION [LARGE SCALE ANALYSIS] AT SER-474; THR-479; SER-705 AND SER-882</scope>
    <scope>IDENTIFICATION BY MASS SPECTROMETRY [LARGE SCALE ANALYSIS]</scope>
    <source>
        <tissue>Cervix carcinoma</tissue>
    </source>
</reference>
<reference key="13">
    <citation type="journal article" date="2011" name="Nat. Cell Biol.">
        <title>PKA-dependent regulation of the histone lysine demethylase complex PHF2-ARID5B.</title>
        <authorList>
            <person name="Baba A."/>
            <person name="Ohtake F."/>
            <person name="Okuno Y."/>
            <person name="Yokota K."/>
            <person name="Okada M."/>
            <person name="Imai Y."/>
            <person name="Ni M."/>
            <person name="Meyer C.A."/>
            <person name="Igarashi K."/>
            <person name="Kanno J."/>
            <person name="Brown M."/>
            <person name="Kato S."/>
        </authorList>
    </citation>
    <scope>FUNCTION</scope>
    <scope>CATALYTIC ACTIVITY</scope>
    <scope>PHOSPHORYLATION BY PKA</scope>
    <scope>PHOSPHORYLATION AT SER-1056</scope>
    <scope>INTERACTION WITH ARID5B; HNF4A AND NR1H4</scope>
    <scope>IDENTIFICATION BY MASS SPECTROMETRY</scope>
    <scope>TISSUE SPECIFICITY</scope>
    <scope>IDENTIFICATION IN THE PHF2-ARID5B COMPLEX</scope>
    <scope>MUTAGENESIS OF HIS-249; SER-757; SER-899; SER-954 AND SER-1056</scope>
</reference>
<reference key="14">
    <citation type="journal article" date="2011" name="Sci. Signal.">
        <title>System-wide temporal characterization of the proteome and phosphoproteome of human embryonic stem cell differentiation.</title>
        <authorList>
            <person name="Rigbolt K.T."/>
            <person name="Prokhorova T.A."/>
            <person name="Akimov V."/>
            <person name="Henningsen J."/>
            <person name="Johansen P.T."/>
            <person name="Kratchmarova I."/>
            <person name="Kassem M."/>
            <person name="Mann M."/>
            <person name="Olsen J.V."/>
            <person name="Blagoev B."/>
        </authorList>
    </citation>
    <scope>PHOSPHORYLATION [LARGE SCALE ANALYSIS] AT SER-705</scope>
    <scope>IDENTIFICATION BY MASS SPECTROMETRY [LARGE SCALE ANALYSIS]</scope>
</reference>
<reference key="15">
    <citation type="journal article" date="2013" name="J. Proteome Res.">
        <title>Toward a comprehensive characterization of a human cancer cell phosphoproteome.</title>
        <authorList>
            <person name="Zhou H."/>
            <person name="Di Palma S."/>
            <person name="Preisinger C."/>
            <person name="Peng M."/>
            <person name="Polat A.N."/>
            <person name="Heck A.J."/>
            <person name="Mohammed S."/>
        </authorList>
    </citation>
    <scope>PHOSPHORYLATION [LARGE SCALE ANALYSIS] AT SER-539; SER-655; SER-705 AND SER-882</scope>
    <scope>IDENTIFICATION BY MASS SPECTROMETRY [LARGE SCALE ANALYSIS]</scope>
    <source>
        <tissue>Cervix carcinoma</tissue>
        <tissue>Erythroleukemia</tissue>
    </source>
</reference>
<reference key="16">
    <citation type="journal article" date="2014" name="J. Proteomics">
        <title>An enzyme assisted RP-RPLC approach for in-depth analysis of human liver phosphoproteome.</title>
        <authorList>
            <person name="Bian Y."/>
            <person name="Song C."/>
            <person name="Cheng K."/>
            <person name="Dong M."/>
            <person name="Wang F."/>
            <person name="Huang J."/>
            <person name="Sun D."/>
            <person name="Wang L."/>
            <person name="Ye M."/>
            <person name="Zou H."/>
        </authorList>
    </citation>
    <scope>PHOSPHORYLATION [LARGE SCALE ANALYSIS] AT SER-474; SER-681; SER-882 AND SER-899</scope>
    <scope>IDENTIFICATION BY MASS SPECTROMETRY [LARGE SCALE ANALYSIS]</scope>
    <source>
        <tissue>Liver</tissue>
    </source>
</reference>
<reference key="17">
    <citation type="journal article" date="2017" name="Nat. Struct. Mol. Biol.">
        <title>Site-specific mapping of the human SUMO proteome reveals co-modification with phosphorylation.</title>
        <authorList>
            <person name="Hendriks I.A."/>
            <person name="Lyon D."/>
            <person name="Young C."/>
            <person name="Jensen L.J."/>
            <person name="Vertegaal A.C."/>
            <person name="Nielsen M.L."/>
        </authorList>
    </citation>
    <scope>SUMOYLATION [LARGE SCALE ANALYSIS] AT LYS-711</scope>
    <scope>IDENTIFICATION BY MASS SPECTROMETRY [LARGE SCALE ANALYSIS]</scope>
</reference>
<reference key="18">
    <citation type="journal article" date="2010" name="J. Biol. Chem.">
        <title>Recognition of histone H3K4 trimethylation by the plant homeodomain of PHF2 modulates histone demethylation.</title>
        <authorList>
            <person name="Wen H."/>
            <person name="Li J."/>
            <person name="Song T."/>
            <person name="Lu M."/>
            <person name="Kan P.Y."/>
            <person name="Lee M.G."/>
            <person name="Sha B."/>
            <person name="Shi X."/>
        </authorList>
    </citation>
    <scope>X-RAY CRYSTALLOGRAPHY (1.78 ANGSTROMS) OF 1-70 IN COMPLEX WITH ZINC</scope>
    <scope>DOMAIN PHD-TYPE ZINC-FINGER</scope>
    <scope>FUNCTION</scope>
    <scope>SUBCELLULAR LOCATION</scope>
    <scope>MUTAGENESIS OF TYR-7 AND TRP-29</scope>
</reference>
<reference key="19">
    <citation type="journal article" date="2011" name="J. Mol. Biol.">
        <title>Structural basis for human PHF2 Jumonji domain interaction with metal ions.</title>
        <authorList>
            <person name="Horton J.R."/>
            <person name="Upadhyay A.K."/>
            <person name="Hashimoto H."/>
            <person name="Zhang X."/>
            <person name="Cheng X."/>
        </authorList>
    </citation>
    <scope>X-RAY CRYSTALLOGRAPHY (1.95 ANGSTROMS) OF 60-451 IN COMPLEX WITH IRON AND N-OXALYLGLYCINE</scope>
    <scope>FUNCTION</scope>
    <scope>MUTAGENESIS OF TYR-321</scope>
</reference>
<accession>O75151</accession>
<accession>Q4VXG0</accession>
<accession>Q8N3K2</accession>
<accession>Q9Y6N4</accession>
<gene>
    <name evidence="12" type="primary">PHF2</name>
    <name evidence="9" type="synonym">CENP-35</name>
    <name type="synonym">KIAA0662</name>
</gene>
<feature type="chain" id="PRO_0000059290" description="Lysine-specific demethylase PHF2">
    <location>
        <begin position="1"/>
        <end position="1096"/>
    </location>
</feature>
<feature type="domain" description="JmjC" evidence="3">
    <location>
        <begin position="197"/>
        <end position="353"/>
    </location>
</feature>
<feature type="zinc finger region" description="PHD-type" evidence="2">
    <location>
        <begin position="5"/>
        <end position="56"/>
    </location>
</feature>
<feature type="region of interest" description="Disordered" evidence="4">
    <location>
        <begin position="447"/>
        <end position="634"/>
    </location>
</feature>
<feature type="region of interest" description="Disordered" evidence="4">
    <location>
        <begin position="646"/>
        <end position="674"/>
    </location>
</feature>
<feature type="region of interest" description="Disordered" evidence="4">
    <location>
        <begin position="719"/>
        <end position="799"/>
    </location>
</feature>
<feature type="region of interest" description="Disordered" evidence="4">
    <location>
        <begin position="817"/>
        <end position="846"/>
    </location>
</feature>
<feature type="region of interest" description="Disordered" evidence="4">
    <location>
        <begin position="877"/>
        <end position="1078"/>
    </location>
</feature>
<feature type="compositionally biased region" description="Pro residues" evidence="4">
    <location>
        <begin position="503"/>
        <end position="518"/>
    </location>
</feature>
<feature type="compositionally biased region" description="Basic and acidic residues" evidence="4">
    <location>
        <begin position="548"/>
        <end position="563"/>
    </location>
</feature>
<feature type="compositionally biased region" description="Basic and acidic residues" evidence="4">
    <location>
        <begin position="578"/>
        <end position="624"/>
    </location>
</feature>
<feature type="compositionally biased region" description="Basic and acidic residues" evidence="4">
    <location>
        <begin position="665"/>
        <end position="674"/>
    </location>
</feature>
<feature type="compositionally biased region" description="Basic and acidic residues" evidence="4">
    <location>
        <begin position="729"/>
        <end position="757"/>
    </location>
</feature>
<feature type="compositionally biased region" description="Basic and acidic residues" evidence="4">
    <location>
        <begin position="916"/>
        <end position="925"/>
    </location>
</feature>
<feature type="compositionally biased region" description="Basic residues" evidence="4">
    <location>
        <begin position="949"/>
        <end position="959"/>
    </location>
</feature>
<feature type="compositionally biased region" description="Low complexity" evidence="4">
    <location>
        <begin position="960"/>
        <end position="1009"/>
    </location>
</feature>
<feature type="compositionally biased region" description="Low complexity" evidence="4">
    <location>
        <begin position="1027"/>
        <end position="1040"/>
    </location>
</feature>
<feature type="compositionally biased region" description="Polar residues" evidence="4">
    <location>
        <begin position="1053"/>
        <end position="1065"/>
    </location>
</feature>
<feature type="binding site">
    <location>
        <position position="193"/>
    </location>
    <ligand>
        <name>2-oxoglutarate</name>
        <dbReference type="ChEBI" id="CHEBI:16810"/>
    </ligand>
</feature>
<feature type="binding site">
    <location>
        <position position="246"/>
    </location>
    <ligand>
        <name>2-oxoglutarate</name>
        <dbReference type="ChEBI" id="CHEBI:16810"/>
    </ligand>
</feature>
<feature type="binding site" evidence="3 7">
    <location>
        <position position="249"/>
    </location>
    <ligand>
        <name>Fe cation</name>
        <dbReference type="ChEBI" id="CHEBI:24875"/>
        <note>catalytic</note>
    </ligand>
</feature>
<feature type="binding site" evidence="3 7">
    <location>
        <position position="251"/>
    </location>
    <ligand>
        <name>Fe cation</name>
        <dbReference type="ChEBI" id="CHEBI:24875"/>
        <note>catalytic</note>
    </ligand>
</feature>
<feature type="binding site">
    <location>
        <position position="259"/>
    </location>
    <ligand>
        <name>2-oxoglutarate</name>
        <dbReference type="ChEBI" id="CHEBI:16810"/>
    </ligand>
</feature>
<feature type="binding site">
    <location>
        <position position="266"/>
    </location>
    <ligand>
        <name>2-oxoglutarate</name>
        <dbReference type="ChEBI" id="CHEBI:16810"/>
    </ligand>
</feature>
<feature type="binding site">
    <location>
        <position position="321"/>
    </location>
    <ligand>
        <name>2-oxoglutarate</name>
        <dbReference type="ChEBI" id="CHEBI:16810"/>
    </ligand>
</feature>
<feature type="binding site" evidence="3 7">
    <location>
        <position position="321"/>
    </location>
    <ligand>
        <name>Fe cation</name>
        <dbReference type="ChEBI" id="CHEBI:24875"/>
        <note>catalytic</note>
    </ligand>
</feature>
<feature type="binding site">
    <location>
        <position position="323"/>
    </location>
    <ligand>
        <name>2-oxoglutarate</name>
        <dbReference type="ChEBI" id="CHEBI:16810"/>
    </ligand>
</feature>
<feature type="modified residue" description="Phosphoserine" evidence="15 18">
    <location>
        <position position="474"/>
    </location>
</feature>
<feature type="modified residue" description="Phosphothreonine" evidence="15">
    <location>
        <position position="479"/>
    </location>
</feature>
<feature type="modified residue" description="Phosphoserine" evidence="13 17">
    <location>
        <position position="539"/>
    </location>
</feature>
<feature type="modified residue" description="Phosphoserine" evidence="17">
    <location>
        <position position="655"/>
    </location>
</feature>
<feature type="modified residue" description="Phosphoserine" evidence="18">
    <location>
        <position position="681"/>
    </location>
</feature>
<feature type="modified residue" description="Phosphoserine" evidence="15 16 17">
    <location>
        <position position="705"/>
    </location>
</feature>
<feature type="modified residue" description="N6-acetyllysine" evidence="1">
    <location>
        <position position="720"/>
    </location>
</feature>
<feature type="modified residue" description="Phosphotyrosine" evidence="1">
    <location>
        <position position="728"/>
    </location>
</feature>
<feature type="modified residue" description="Phosphoserine" evidence="1">
    <location>
        <position position="730"/>
    </location>
</feature>
<feature type="modified residue" description="Phosphoserine" evidence="1">
    <location>
        <position position="733"/>
    </location>
</feature>
<feature type="modified residue" description="Phosphoserine" evidence="1">
    <location>
        <position position="734"/>
    </location>
</feature>
<feature type="modified residue" description="Phosphoserine" evidence="1">
    <location>
        <position position="738"/>
    </location>
</feature>
<feature type="modified residue" description="Phosphoserine" evidence="1">
    <location>
        <position position="879"/>
    </location>
</feature>
<feature type="modified residue" description="Phosphoserine" evidence="13 14 15 17 18">
    <location>
        <position position="882"/>
    </location>
</feature>
<feature type="modified residue" description="Phosphoserine" evidence="18">
    <location>
        <position position="899"/>
    </location>
</feature>
<feature type="modified residue" description="Phosphoserine; by PKA" evidence="8">
    <location>
        <position position="1056"/>
    </location>
</feature>
<feature type="cross-link" description="Glycyl lysine isopeptide (Lys-Gly) (interchain with G-Cter in SUMO2)" evidence="19">
    <location>
        <position position="711"/>
    </location>
</feature>
<feature type="sequence variant" id="VAR_047553" description="In dbSNP:rs34279404.">
    <original>T</original>
    <variation>P</variation>
    <location>
        <position position="56"/>
    </location>
</feature>
<feature type="sequence variant" id="VAR_051598" description="In dbSNP:rs35236745.">
    <original>S</original>
    <variation>L</variation>
    <location>
        <position position="1058"/>
    </location>
</feature>
<feature type="mutagenesis site" description="Abolishes binding to H3K4me2 and H3K4me3." evidence="5">
    <original>Y</original>
    <variation>A</variation>
    <location>
        <position position="7"/>
    </location>
</feature>
<feature type="mutagenesis site" description="Abolishes binding to H3K4me2 and H3K4me3." evidence="5">
    <original>W</original>
    <variation>A</variation>
    <location>
        <position position="29"/>
    </location>
</feature>
<feature type="mutagenesis site" description="Abolishes demethylase activity." evidence="8">
    <original>H</original>
    <variation>A</variation>
    <location>
        <position position="249"/>
    </location>
</feature>
<feature type="mutagenesis site" description="Does not alter iron-binding nor activates histone demethylase activity." evidence="7">
    <original>Y</original>
    <variation>H</variation>
    <location>
        <position position="321"/>
    </location>
</feature>
<feature type="mutagenesis site" description="Abolishes phosphorylation by PKA and activation of demethylase activity; when associated with A-899; A-954 and A-1056." evidence="8">
    <original>S</original>
    <variation>A</variation>
    <location>
        <position position="757"/>
    </location>
</feature>
<feature type="mutagenesis site" description="Abolishes phosphorylation by PKA and activation of demethylase activity; when associated with A-757; A-954 and A-1056." evidence="8">
    <original>S</original>
    <variation>A</variation>
    <location>
        <position position="899"/>
    </location>
</feature>
<feature type="mutagenesis site" description="Abolishes phosphorylation by PKA and activation of demethylase activity; when associated with A-757; A-899 and A-1056." evidence="8">
    <original>S</original>
    <variation>A</variation>
    <location>
        <position position="954"/>
    </location>
</feature>
<feature type="mutagenesis site" description="Abolishes phosphorylation by PKA and activation of demethylase activity; when associated with A-757; A-899 and A-954." evidence="8">
    <original>S</original>
    <variation>A</variation>
    <location>
        <position position="1056"/>
    </location>
</feature>
<feature type="sequence conflict" description="In Ref. 2; BAA31637." evidence="10" ref="2">
    <original>FMIECDACKDWFHGSCVGVEEEE</original>
    <variation>PRAARPPARPGPTRAAQRRGRAT</variation>
    <location>
        <begin position="19"/>
        <end position="41"/>
    </location>
</feature>
<feature type="sequence conflict" description="In Ref. 1; AAD21791." evidence="10" ref="1">
    <original>QA</original>
    <variation>PT</variation>
    <location>
        <begin position="75"/>
        <end position="76"/>
    </location>
</feature>
<feature type="sequence conflict" description="In Ref. 2; BAA31637." evidence="10" ref="2">
    <original>S</original>
    <variation>R</variation>
    <location>
        <position position="100"/>
    </location>
</feature>
<feature type="sequence conflict" description="In Ref. 1; AAD21791." evidence="10" ref="1">
    <original>A</original>
    <variation>S</variation>
    <location>
        <position position="106"/>
    </location>
</feature>
<feature type="sequence conflict" description="In Ref. 1; AAD21791." evidence="10" ref="1">
    <original>L</original>
    <variation>V</variation>
    <location>
        <position position="115"/>
    </location>
</feature>
<feature type="sequence conflict" description="In Ref. 1; AAD21791." evidence="10" ref="1">
    <original>K</original>
    <variation>R</variation>
    <location>
        <position position="621"/>
    </location>
</feature>
<feature type="sequence conflict" description="In Ref. 1; AAD21791." evidence="10" ref="1">
    <location>
        <position position="633"/>
    </location>
</feature>
<feature type="sequence conflict" description="In Ref. 1; AAD21791." evidence="10" ref="1">
    <original>K</original>
    <variation>R</variation>
    <location>
        <position position="642"/>
    </location>
</feature>
<feature type="sequence conflict" description="In Ref. 1; AAD21791." evidence="10" ref="1">
    <original>T</original>
    <variation>S</variation>
    <location>
        <position position="654"/>
    </location>
</feature>
<feature type="sequence conflict" description="In Ref. 1; AAD21791." evidence="10" ref="1">
    <original>N</original>
    <variation>S</variation>
    <location>
        <position position="664"/>
    </location>
</feature>
<feature type="sequence conflict" description="In Ref. 1; AAD21791." evidence="10" ref="1">
    <original>P</original>
    <variation>A</variation>
    <location>
        <position position="670"/>
    </location>
</feature>
<feature type="sequence conflict" description="In Ref. 1; AAD21791." evidence="10" ref="1">
    <original>N</original>
    <variation>S</variation>
    <location>
        <position position="698"/>
    </location>
</feature>
<feature type="sequence conflict" description="In Ref. 1; AAD21791." evidence="10" ref="1">
    <original>AVLPTPVT</original>
    <variation>EALLMPTS</variation>
    <location>
        <begin position="712"/>
        <end position="719"/>
    </location>
</feature>
<feature type="sequence conflict" description="In Ref. 1; AAD21791." evidence="10" ref="1">
    <original>A</original>
    <variation>V</variation>
    <location>
        <position position="727"/>
    </location>
</feature>
<feature type="sequence conflict" description="In Ref. 1; AAD21791." evidence="10" ref="1">
    <original>R</original>
    <variation>K</variation>
    <location>
        <position position="752"/>
    </location>
</feature>
<feature type="sequence conflict" description="In Ref. 1; AAD21791." evidence="10" ref="1">
    <original>S</original>
    <variation>N</variation>
    <location>
        <position position="782"/>
    </location>
</feature>
<feature type="sequence conflict" description="In Ref. 1; AAD21791." evidence="10" ref="1">
    <original>A</original>
    <variation>T</variation>
    <location>
        <position position="817"/>
    </location>
</feature>
<feature type="sequence conflict" description="In Ref. 1; AAD21791." evidence="10" ref="1">
    <original>S</original>
    <variation>G</variation>
    <location>
        <position position="823"/>
    </location>
</feature>
<feature type="sequence conflict" description="In Ref. 1; AAD21791." evidence="10" ref="1">
    <original>N</original>
    <variation>I</variation>
    <location>
        <position position="833"/>
    </location>
</feature>
<feature type="sequence conflict" description="In Ref. 1; AAD21791." evidence="10" ref="1">
    <original>SGKSA</original>
    <variation>NKGT</variation>
    <location>
        <begin position="837"/>
        <end position="841"/>
    </location>
</feature>
<feature type="sequence conflict" description="In Ref. 1; AAD21791." evidence="10" ref="1">
    <original>A</original>
    <variation>T</variation>
    <location>
        <position position="849"/>
    </location>
</feature>
<feature type="sequence conflict" description="In Ref. 1; AAD21791." evidence="10" ref="1">
    <original>D</original>
    <variation>E</variation>
    <location>
        <position position="857"/>
    </location>
</feature>
<feature type="sequence conflict" description="In Ref. 1; AAD21791." evidence="10" ref="1">
    <location>
        <position position="862"/>
    </location>
</feature>
<feature type="sequence conflict" description="In Ref. 1; AAD21791." evidence="10" ref="1">
    <original>I</original>
    <variation>V</variation>
    <location>
        <position position="888"/>
    </location>
</feature>
<feature type="sequence conflict" description="In Ref. 1; AAD21791." evidence="10" ref="1">
    <original>SK</original>
    <variation>NR</variation>
    <location>
        <begin position="949"/>
        <end position="950"/>
    </location>
</feature>
<feature type="sequence conflict" description="In Ref. 1; AAD21791." evidence="10" ref="1">
    <original>SA</original>
    <variation>NT</variation>
    <location>
        <begin position="954"/>
        <end position="955"/>
    </location>
</feature>
<feature type="sequence conflict" description="In Ref. 1; AAD21791." evidence="10" ref="1">
    <original>LT</original>
    <variation>PA</variation>
    <location>
        <begin position="959"/>
        <end position="960"/>
    </location>
</feature>
<feature type="sequence conflict" description="In Ref. 1; AAD21791." evidence="10" ref="1">
    <original>T</original>
    <variation>A</variation>
    <location>
        <position position="964"/>
    </location>
</feature>
<feature type="sequence conflict" description="In Ref. 1; AAD21791." evidence="10" ref="1">
    <original>T</original>
    <variation>I</variation>
    <location>
        <position position="968"/>
    </location>
</feature>
<feature type="sequence conflict" description="In Ref. 1; AAD21791." evidence="10" ref="1">
    <original>I</original>
    <variation>ASASTGTT</variation>
    <location>
        <position position="972"/>
    </location>
</feature>
<feature type="sequence conflict" description="In Ref. 1; AAD21791." evidence="10" ref="1">
    <original>G</original>
    <variation>S</variation>
    <location>
        <position position="975"/>
    </location>
</feature>
<feature type="sequence conflict" description="In Ref. 1; AAD21791." evidence="10" ref="1">
    <original>ST</original>
    <variation>PA</variation>
    <location>
        <begin position="978"/>
        <end position="979"/>
    </location>
</feature>
<feature type="sequence conflict" description="In Ref. 2; BAA31637 and 6; CAD38938." evidence="10" ref="2 6">
    <original>T</original>
    <variation>TTPAST</variation>
    <location>
        <position position="996"/>
    </location>
</feature>
<feature type="sequence conflict" description="In Ref. 1; AAD21791." evidence="10" ref="1">
    <original>TGA</original>
    <variation>SGS</variation>
    <location>
        <begin position="1033"/>
        <end position="1035"/>
    </location>
</feature>
<feature type="sequence conflict" description="In Ref. 1; AAD21791." evidence="10" ref="1">
    <original>T</original>
    <variation>A</variation>
    <location>
        <position position="1040"/>
    </location>
</feature>
<feature type="sequence conflict" description="In Ref. 1; AAD21791." evidence="10" ref="1">
    <location>
        <position position="1063"/>
    </location>
</feature>
<feature type="strand" evidence="24">
    <location>
        <begin position="2"/>
        <end position="5"/>
    </location>
</feature>
<feature type="turn" evidence="23">
    <location>
        <begin position="8"/>
        <end position="11"/>
    </location>
</feature>
<feature type="strand" evidence="23">
    <location>
        <begin position="20"/>
        <end position="22"/>
    </location>
</feature>
<feature type="turn" evidence="23">
    <location>
        <begin position="24"/>
        <end position="26"/>
    </location>
</feature>
<feature type="strand" evidence="23">
    <location>
        <begin position="29"/>
        <end position="31"/>
    </location>
</feature>
<feature type="helix" evidence="23">
    <location>
        <begin position="32"/>
        <end position="35"/>
    </location>
</feature>
<feature type="helix" evidence="23">
    <location>
        <begin position="39"/>
        <end position="44"/>
    </location>
</feature>
<feature type="strand" evidence="23">
    <location>
        <begin position="45"/>
        <end position="47"/>
    </location>
</feature>
<feature type="helix" evidence="23">
    <location>
        <begin position="51"/>
        <end position="57"/>
    </location>
</feature>
<feature type="helix" evidence="22">
    <location>
        <begin position="87"/>
        <end position="95"/>
    </location>
</feature>
<feature type="helix" evidence="22">
    <location>
        <begin position="101"/>
        <end position="103"/>
    </location>
</feature>
<feature type="strand" evidence="22">
    <location>
        <begin position="105"/>
        <end position="107"/>
    </location>
</feature>
<feature type="helix" evidence="22">
    <location>
        <begin position="110"/>
        <end position="112"/>
    </location>
</feature>
<feature type="helix" evidence="22">
    <location>
        <begin position="115"/>
        <end position="121"/>
    </location>
</feature>
<feature type="strand" evidence="22">
    <location>
        <begin position="127"/>
        <end position="131"/>
    </location>
</feature>
<feature type="turn" evidence="22">
    <location>
        <begin position="133"/>
        <end position="136"/>
    </location>
</feature>
<feature type="helix" evidence="22">
    <location>
        <begin position="146"/>
        <end position="153"/>
    </location>
</feature>
<feature type="strand" evidence="22">
    <location>
        <begin position="158"/>
        <end position="163"/>
    </location>
</feature>
<feature type="turn" evidence="22">
    <location>
        <begin position="164"/>
        <end position="166"/>
    </location>
</feature>
<feature type="strand" evidence="22">
    <location>
        <begin position="169"/>
        <end position="173"/>
    </location>
</feature>
<feature type="helix" evidence="22">
    <location>
        <begin position="174"/>
        <end position="181"/>
    </location>
</feature>
<feature type="strand" evidence="24">
    <location>
        <begin position="183"/>
        <end position="185"/>
    </location>
</feature>
<feature type="strand" evidence="22">
    <location>
        <begin position="190"/>
        <end position="196"/>
    </location>
</feature>
<feature type="helix" evidence="22">
    <location>
        <begin position="201"/>
        <end position="205"/>
    </location>
</feature>
<feature type="helix" evidence="22">
    <location>
        <begin position="210"/>
        <end position="215"/>
    </location>
</feature>
<feature type="helix" evidence="22">
    <location>
        <begin position="217"/>
        <end position="221"/>
    </location>
</feature>
<feature type="strand" evidence="22">
    <location>
        <begin position="236"/>
        <end position="240"/>
    </location>
</feature>
<feature type="strand" evidence="22">
    <location>
        <begin position="245"/>
        <end position="249"/>
    </location>
</feature>
<feature type="helix" evidence="22">
    <location>
        <begin position="252"/>
        <end position="254"/>
    </location>
</feature>
<feature type="strand" evidence="22">
    <location>
        <begin position="256"/>
        <end position="271"/>
    </location>
</feature>
<feature type="helix" evidence="22">
    <location>
        <begin position="275"/>
        <end position="286"/>
    </location>
</feature>
<feature type="helix" evidence="22">
    <location>
        <begin position="290"/>
        <end position="292"/>
    </location>
</feature>
<feature type="helix" evidence="22">
    <location>
        <begin position="295"/>
        <end position="298"/>
    </location>
</feature>
<feature type="strand" evidence="22">
    <location>
        <begin position="303"/>
        <end position="308"/>
    </location>
</feature>
<feature type="strand" evidence="22">
    <location>
        <begin position="312"/>
        <end position="315"/>
    </location>
</feature>
<feature type="strand" evidence="22">
    <location>
        <begin position="320"/>
        <end position="336"/>
    </location>
</feature>
<feature type="helix" evidence="21">
    <location>
        <begin position="339"/>
        <end position="341"/>
    </location>
</feature>
<feature type="helix" evidence="22">
    <location>
        <begin position="342"/>
        <end position="355"/>
    </location>
</feature>
<feature type="strand" evidence="20">
    <location>
        <begin position="359"/>
        <end position="361"/>
    </location>
</feature>
<feature type="helix" evidence="22">
    <location>
        <begin position="366"/>
        <end position="387"/>
    </location>
</feature>
<feature type="helix" evidence="22">
    <location>
        <begin position="393"/>
        <end position="409"/>
    </location>
</feature>
<feature type="turn" evidence="21">
    <location>
        <begin position="412"/>
        <end position="414"/>
    </location>
</feature>
<feature type="helix" evidence="21">
    <location>
        <begin position="415"/>
        <end position="418"/>
    </location>
</feature>
<feature type="helix" evidence="22">
    <location>
        <begin position="419"/>
        <end position="421"/>
    </location>
</feature>
<feature type="helix" evidence="22">
    <location>
        <begin position="428"/>
        <end position="443"/>
    </location>
</feature>
<evidence type="ECO:0000250" key="1">
    <source>
        <dbReference type="UniProtKB" id="Q9WTU0"/>
    </source>
</evidence>
<evidence type="ECO:0000255" key="2">
    <source>
        <dbReference type="PROSITE-ProRule" id="PRU00146"/>
    </source>
</evidence>
<evidence type="ECO:0000255" key="3">
    <source>
        <dbReference type="PROSITE-ProRule" id="PRU00538"/>
    </source>
</evidence>
<evidence type="ECO:0000256" key="4">
    <source>
        <dbReference type="SAM" id="MobiDB-lite"/>
    </source>
</evidence>
<evidence type="ECO:0000269" key="5">
    <source>
    </source>
</evidence>
<evidence type="ECO:0000269" key="6">
    <source>
    </source>
</evidence>
<evidence type="ECO:0000269" key="7">
    <source>
    </source>
</evidence>
<evidence type="ECO:0000269" key="8">
    <source>
    </source>
</evidence>
<evidence type="ECO:0000303" key="9">
    <source>
    </source>
</evidence>
<evidence type="ECO:0000305" key="10"/>
<evidence type="ECO:0000305" key="11">
    <source>
    </source>
</evidence>
<evidence type="ECO:0000312" key="12">
    <source>
        <dbReference type="HGNC" id="HGNC:8920"/>
    </source>
</evidence>
<evidence type="ECO:0007744" key="13">
    <source>
    </source>
</evidence>
<evidence type="ECO:0007744" key="14">
    <source>
    </source>
</evidence>
<evidence type="ECO:0007744" key="15">
    <source>
    </source>
</evidence>
<evidence type="ECO:0007744" key="16">
    <source>
    </source>
</evidence>
<evidence type="ECO:0007744" key="17">
    <source>
    </source>
</evidence>
<evidence type="ECO:0007744" key="18">
    <source>
    </source>
</evidence>
<evidence type="ECO:0007744" key="19">
    <source>
    </source>
</evidence>
<evidence type="ECO:0007829" key="20">
    <source>
        <dbReference type="PDB" id="3PU3"/>
    </source>
</evidence>
<evidence type="ECO:0007829" key="21">
    <source>
        <dbReference type="PDB" id="3PU8"/>
    </source>
</evidence>
<evidence type="ECO:0007829" key="22">
    <source>
        <dbReference type="PDB" id="3PUA"/>
    </source>
</evidence>
<evidence type="ECO:0007829" key="23">
    <source>
        <dbReference type="PDB" id="7M10"/>
    </source>
</evidence>
<evidence type="ECO:0007829" key="24">
    <source>
        <dbReference type="PDB" id="8F8Y"/>
    </source>
</evidence>
<organism>
    <name type="scientific">Homo sapiens</name>
    <name type="common">Human</name>
    <dbReference type="NCBI Taxonomy" id="9606"/>
    <lineage>
        <taxon>Eukaryota</taxon>
        <taxon>Metazoa</taxon>
        <taxon>Chordata</taxon>
        <taxon>Craniata</taxon>
        <taxon>Vertebrata</taxon>
        <taxon>Euteleostomi</taxon>
        <taxon>Mammalia</taxon>
        <taxon>Eutheria</taxon>
        <taxon>Euarchontoglires</taxon>
        <taxon>Primates</taxon>
        <taxon>Haplorrhini</taxon>
        <taxon>Catarrhini</taxon>
        <taxon>Hominidae</taxon>
        <taxon>Homo</taxon>
    </lineage>
</organism>
<proteinExistence type="evidence at protein level"/>
<name>PHF2_HUMAN</name>
<protein>
    <recommendedName>
        <fullName>Lysine-specific demethylase PHF2</fullName>
        <ecNumber evidence="8">1.14.11.-</ecNumber>
    </recommendedName>
    <alternativeName>
        <fullName>GRC5</fullName>
    </alternativeName>
    <alternativeName>
        <fullName>PHD finger protein 2</fullName>
    </alternativeName>
</protein>
<dbReference type="EC" id="1.14.11.-" evidence="8"/>
<dbReference type="EMBL" id="AF043725">
    <property type="protein sequence ID" value="AAD21791.1"/>
    <property type="molecule type" value="mRNA"/>
</dbReference>
<dbReference type="EMBL" id="AB014562">
    <property type="protein sequence ID" value="BAA31637.2"/>
    <property type="status" value="ALT_INIT"/>
    <property type="molecule type" value="mRNA"/>
</dbReference>
<dbReference type="EMBL" id="AL353629">
    <property type="status" value="NOT_ANNOTATED_CDS"/>
    <property type="molecule type" value="Genomic_DNA"/>
</dbReference>
<dbReference type="EMBL" id="AL359181">
    <property type="status" value="NOT_ANNOTATED_CDS"/>
    <property type="molecule type" value="Genomic_DNA"/>
</dbReference>
<dbReference type="EMBL" id="CH471089">
    <property type="protein sequence ID" value="EAW62867.1"/>
    <property type="molecule type" value="Genomic_DNA"/>
</dbReference>
<dbReference type="EMBL" id="AL834263">
    <property type="protein sequence ID" value="CAD38938.1"/>
    <property type="molecule type" value="mRNA"/>
</dbReference>
<dbReference type="CCDS" id="CCDS35069.1"/>
<dbReference type="PIR" id="T00369">
    <property type="entry name" value="T00369"/>
</dbReference>
<dbReference type="RefSeq" id="NP_005383.3">
    <property type="nucleotide sequence ID" value="NM_005392.3"/>
</dbReference>
<dbReference type="PDB" id="3KQI">
    <property type="method" value="X-ray"/>
    <property type="resolution" value="1.78 A"/>
    <property type="chains" value="A=1-70"/>
</dbReference>
<dbReference type="PDB" id="3PTR">
    <property type="method" value="X-ray"/>
    <property type="resolution" value="1.95 A"/>
    <property type="chains" value="B=60-451"/>
</dbReference>
<dbReference type="PDB" id="3PU3">
    <property type="method" value="X-ray"/>
    <property type="resolution" value="1.95 A"/>
    <property type="chains" value="A/B=60-451"/>
</dbReference>
<dbReference type="PDB" id="3PU8">
    <property type="method" value="X-ray"/>
    <property type="resolution" value="1.94 A"/>
    <property type="chains" value="A/B=60-451"/>
</dbReference>
<dbReference type="PDB" id="3PUA">
    <property type="method" value="X-ray"/>
    <property type="resolution" value="1.89 A"/>
    <property type="chains" value="A=60-451"/>
</dbReference>
<dbReference type="PDB" id="3PUS">
    <property type="method" value="X-ray"/>
    <property type="resolution" value="2.08 A"/>
    <property type="chains" value="A/B=60-451"/>
</dbReference>
<dbReference type="PDB" id="7M10">
    <property type="method" value="X-ray"/>
    <property type="resolution" value="1.15 A"/>
    <property type="chains" value="A=1-70"/>
</dbReference>
<dbReference type="PDB" id="8F8Y">
    <property type="method" value="X-ray"/>
    <property type="resolution" value="3.06 A"/>
    <property type="chains" value="A/B=1-451"/>
</dbReference>
<dbReference type="PDB" id="8F8Z">
    <property type="method" value="X-ray"/>
    <property type="resolution" value="3.30 A"/>
    <property type="chains" value="A/B=1-451"/>
</dbReference>
<dbReference type="PDBsum" id="3KQI"/>
<dbReference type="PDBsum" id="3PTR"/>
<dbReference type="PDBsum" id="3PU3"/>
<dbReference type="PDBsum" id="3PU8"/>
<dbReference type="PDBsum" id="3PUA"/>
<dbReference type="PDBsum" id="3PUS"/>
<dbReference type="PDBsum" id="7M10"/>
<dbReference type="PDBsum" id="8F8Y"/>
<dbReference type="PDBsum" id="8F8Z"/>
<dbReference type="SMR" id="O75151"/>
<dbReference type="BioGRID" id="111272">
    <property type="interactions" value="74"/>
</dbReference>
<dbReference type="ComplexPortal" id="CPX-7861">
    <property type="entry name" value="PHF2-ARID5B histone lysine demethylase complex"/>
</dbReference>
<dbReference type="FunCoup" id="O75151">
    <property type="interactions" value="2565"/>
</dbReference>
<dbReference type="IntAct" id="O75151">
    <property type="interactions" value="29"/>
</dbReference>
<dbReference type="MINT" id="O75151"/>
<dbReference type="STRING" id="9606.ENSP00000352185"/>
<dbReference type="BindingDB" id="O75151"/>
<dbReference type="ChEMBL" id="CHEMBL4295672"/>
<dbReference type="DrugCentral" id="O75151"/>
<dbReference type="GlyGen" id="O75151">
    <property type="glycosylation" value="4 sites, 1 N-linked glycan (1 site), 1 O-linked glycan (1 site)"/>
</dbReference>
<dbReference type="iPTMnet" id="O75151"/>
<dbReference type="PhosphoSitePlus" id="O75151"/>
<dbReference type="SwissPalm" id="O75151"/>
<dbReference type="BioMuta" id="PHF2"/>
<dbReference type="jPOST" id="O75151"/>
<dbReference type="MassIVE" id="O75151"/>
<dbReference type="PaxDb" id="9606-ENSP00000352185"/>
<dbReference type="PeptideAtlas" id="O75151"/>
<dbReference type="ProteomicsDB" id="49817"/>
<dbReference type="Pumba" id="O75151"/>
<dbReference type="Antibodypedia" id="2009">
    <property type="antibodies" value="94 antibodies from 23 providers"/>
</dbReference>
<dbReference type="DNASU" id="5253"/>
<dbReference type="Ensembl" id="ENST00000359246.9">
    <property type="protein sequence ID" value="ENSP00000352185.4"/>
    <property type="gene ID" value="ENSG00000197724.12"/>
</dbReference>
<dbReference type="GeneID" id="5253"/>
<dbReference type="KEGG" id="hsa:5253"/>
<dbReference type="MANE-Select" id="ENST00000359246.9">
    <property type="protein sequence ID" value="ENSP00000352185.4"/>
    <property type="RefSeq nucleotide sequence ID" value="NM_005392.4"/>
    <property type="RefSeq protein sequence ID" value="NP_005383.3"/>
</dbReference>
<dbReference type="UCSC" id="uc004aub.4">
    <property type="organism name" value="human"/>
</dbReference>
<dbReference type="AGR" id="HGNC:8920"/>
<dbReference type="CTD" id="5253"/>
<dbReference type="DisGeNET" id="5253"/>
<dbReference type="GeneCards" id="PHF2"/>
<dbReference type="HGNC" id="HGNC:8920">
    <property type="gene designation" value="PHF2"/>
</dbReference>
<dbReference type="HPA" id="ENSG00000197724">
    <property type="expression patterns" value="Low tissue specificity"/>
</dbReference>
<dbReference type="MalaCards" id="PHF2"/>
<dbReference type="MIM" id="604351">
    <property type="type" value="gene"/>
</dbReference>
<dbReference type="neXtProt" id="NX_O75151"/>
<dbReference type="OpenTargets" id="ENSG00000197724"/>
<dbReference type="PharmGKB" id="PA33260"/>
<dbReference type="VEuPathDB" id="HostDB:ENSG00000197724"/>
<dbReference type="eggNOG" id="KOG1633">
    <property type="taxonomic scope" value="Eukaryota"/>
</dbReference>
<dbReference type="GeneTree" id="ENSGT00940000158148"/>
<dbReference type="HOGENOM" id="CLU_003540_2_0_1"/>
<dbReference type="InParanoid" id="O75151"/>
<dbReference type="OMA" id="AWYHILK"/>
<dbReference type="OrthoDB" id="5876800at2759"/>
<dbReference type="PAN-GO" id="O75151">
    <property type="GO annotations" value="3 GO annotations based on evolutionary models"/>
</dbReference>
<dbReference type="PhylomeDB" id="O75151"/>
<dbReference type="TreeFam" id="TF106480"/>
<dbReference type="BioCyc" id="MetaCyc:G66-32922-MONOMER"/>
<dbReference type="PathwayCommons" id="O75151"/>
<dbReference type="Reactome" id="R-HSA-3214842">
    <property type="pathway name" value="HDMs demethylate histones"/>
</dbReference>
<dbReference type="SignaLink" id="O75151"/>
<dbReference type="SIGNOR" id="O75151"/>
<dbReference type="BioGRID-ORCS" id="5253">
    <property type="hits" value="39 hits in 1172 CRISPR screens"/>
</dbReference>
<dbReference type="CD-CODE" id="91857CE7">
    <property type="entry name" value="Nucleolus"/>
</dbReference>
<dbReference type="ChiTaRS" id="PHF2">
    <property type="organism name" value="human"/>
</dbReference>
<dbReference type="EvolutionaryTrace" id="O75151"/>
<dbReference type="GenomeRNAi" id="5253"/>
<dbReference type="Pharos" id="O75151">
    <property type="development level" value="Tbio"/>
</dbReference>
<dbReference type="PRO" id="PR:O75151"/>
<dbReference type="Proteomes" id="UP000005640">
    <property type="component" value="Chromosome 9"/>
</dbReference>
<dbReference type="RNAct" id="O75151">
    <property type="molecule type" value="protein"/>
</dbReference>
<dbReference type="Bgee" id="ENSG00000197724">
    <property type="expression patterns" value="Expressed in ganglionic eminence and 185 other cell types or tissues"/>
</dbReference>
<dbReference type="ExpressionAtlas" id="O75151">
    <property type="expression patterns" value="baseline and differential"/>
</dbReference>
<dbReference type="GO" id="GO:0000776">
    <property type="term" value="C:kinetochore"/>
    <property type="evidence" value="ECO:0000314"/>
    <property type="project" value="UniProtKB"/>
</dbReference>
<dbReference type="GO" id="GO:0005730">
    <property type="term" value="C:nucleolus"/>
    <property type="evidence" value="ECO:0000314"/>
    <property type="project" value="UniProtKB"/>
</dbReference>
<dbReference type="GO" id="GO:0005654">
    <property type="term" value="C:nucleoplasm"/>
    <property type="evidence" value="ECO:0000314"/>
    <property type="project" value="HPA"/>
</dbReference>
<dbReference type="GO" id="GO:0005634">
    <property type="term" value="C:nucleus"/>
    <property type="evidence" value="ECO:0000304"/>
    <property type="project" value="ProtInc"/>
</dbReference>
<dbReference type="GO" id="GO:0140002">
    <property type="term" value="F:histone H3K4me3 reader activity"/>
    <property type="evidence" value="ECO:0000314"/>
    <property type="project" value="UniProtKB"/>
</dbReference>
<dbReference type="GO" id="GO:0032454">
    <property type="term" value="F:histone H3K9 demethylase activity"/>
    <property type="evidence" value="ECO:0000314"/>
    <property type="project" value="UniProtKB"/>
</dbReference>
<dbReference type="GO" id="GO:0035575">
    <property type="term" value="F:histone H4K20 demethylase activity"/>
    <property type="evidence" value="ECO:0000250"/>
    <property type="project" value="UniProtKB"/>
</dbReference>
<dbReference type="GO" id="GO:0005506">
    <property type="term" value="F:iron ion binding"/>
    <property type="evidence" value="ECO:0000314"/>
    <property type="project" value="UniProtKB"/>
</dbReference>
<dbReference type="GO" id="GO:0003713">
    <property type="term" value="F:transcription coactivator activity"/>
    <property type="evidence" value="ECO:0000314"/>
    <property type="project" value="UniProtKB"/>
</dbReference>
<dbReference type="GO" id="GO:0003712">
    <property type="term" value="F:transcription coregulator activity"/>
    <property type="evidence" value="ECO:0000318"/>
    <property type="project" value="GO_Central"/>
</dbReference>
<dbReference type="GO" id="GO:0008270">
    <property type="term" value="F:zinc ion binding"/>
    <property type="evidence" value="ECO:0000314"/>
    <property type="project" value="UniProtKB"/>
</dbReference>
<dbReference type="GO" id="GO:0006338">
    <property type="term" value="P:chromatin remodeling"/>
    <property type="evidence" value="ECO:0000318"/>
    <property type="project" value="GO_Central"/>
</dbReference>
<dbReference type="GO" id="GO:0001889">
    <property type="term" value="P:liver development"/>
    <property type="evidence" value="ECO:0000304"/>
    <property type="project" value="UniProtKB"/>
</dbReference>
<dbReference type="GO" id="GO:0061188">
    <property type="term" value="P:negative regulation of rDNA heterochromatin formation"/>
    <property type="evidence" value="ECO:0000315"/>
    <property type="project" value="UniProtKB"/>
</dbReference>
<dbReference type="GO" id="GO:0006482">
    <property type="term" value="P:protein demethylation"/>
    <property type="evidence" value="ECO:0000314"/>
    <property type="project" value="UniProtKB"/>
</dbReference>
<dbReference type="GO" id="GO:0006357">
    <property type="term" value="P:regulation of transcription by RNA polymerase II"/>
    <property type="evidence" value="ECO:0000318"/>
    <property type="project" value="GO_Central"/>
</dbReference>
<dbReference type="GO" id="GO:0045815">
    <property type="term" value="P:transcription initiation-coupled chromatin remodeling"/>
    <property type="evidence" value="ECO:0000250"/>
    <property type="project" value="UniProtKB"/>
</dbReference>
<dbReference type="CDD" id="cd15554">
    <property type="entry name" value="PHD_PHF2_like"/>
    <property type="match status" value="1"/>
</dbReference>
<dbReference type="FunFam" id="1.20.58.1360:FF:000001">
    <property type="entry name" value="Histone lysine demethylase PHF8"/>
    <property type="match status" value="1"/>
</dbReference>
<dbReference type="FunFam" id="3.30.40.10:FF:000193">
    <property type="entry name" value="lysine-specific demethylase PHF2 isoform X1"/>
    <property type="match status" value="1"/>
</dbReference>
<dbReference type="FunFam" id="2.60.120.650:FF:000011">
    <property type="entry name" value="PHD finger protein 2"/>
    <property type="match status" value="1"/>
</dbReference>
<dbReference type="Gene3D" id="1.20.58.1360">
    <property type="match status" value="1"/>
</dbReference>
<dbReference type="Gene3D" id="2.60.120.650">
    <property type="entry name" value="Cupin"/>
    <property type="match status" value="1"/>
</dbReference>
<dbReference type="Gene3D" id="3.30.40.10">
    <property type="entry name" value="Zinc/RING finger domain, C3HC4 (zinc finger)"/>
    <property type="match status" value="1"/>
</dbReference>
<dbReference type="InterPro" id="IPR041070">
    <property type="entry name" value="JHD"/>
</dbReference>
<dbReference type="InterPro" id="IPR050690">
    <property type="entry name" value="JHDM1_Histone_Demethylase"/>
</dbReference>
<dbReference type="InterPro" id="IPR003347">
    <property type="entry name" value="JmjC_dom"/>
</dbReference>
<dbReference type="InterPro" id="IPR019786">
    <property type="entry name" value="Zinc_finger_PHD-type_CS"/>
</dbReference>
<dbReference type="InterPro" id="IPR011011">
    <property type="entry name" value="Znf_FYVE_PHD"/>
</dbReference>
<dbReference type="InterPro" id="IPR001965">
    <property type="entry name" value="Znf_PHD"/>
</dbReference>
<dbReference type="InterPro" id="IPR019787">
    <property type="entry name" value="Znf_PHD-finger"/>
</dbReference>
<dbReference type="InterPro" id="IPR013083">
    <property type="entry name" value="Znf_RING/FYVE/PHD"/>
</dbReference>
<dbReference type="PANTHER" id="PTHR23123">
    <property type="entry name" value="PHD/F-BOX CONTAINING PROTEIN"/>
    <property type="match status" value="1"/>
</dbReference>
<dbReference type="Pfam" id="PF17811">
    <property type="entry name" value="JHD"/>
    <property type="match status" value="1"/>
</dbReference>
<dbReference type="Pfam" id="PF02373">
    <property type="entry name" value="JmjC"/>
    <property type="match status" value="1"/>
</dbReference>
<dbReference type="Pfam" id="PF00628">
    <property type="entry name" value="PHD"/>
    <property type="match status" value="1"/>
</dbReference>
<dbReference type="SMART" id="SM00558">
    <property type="entry name" value="JmjC"/>
    <property type="match status" value="1"/>
</dbReference>
<dbReference type="SMART" id="SM00249">
    <property type="entry name" value="PHD"/>
    <property type="match status" value="1"/>
</dbReference>
<dbReference type="SUPFAM" id="SSF51197">
    <property type="entry name" value="Clavaminate synthase-like"/>
    <property type="match status" value="1"/>
</dbReference>
<dbReference type="SUPFAM" id="SSF57903">
    <property type="entry name" value="FYVE/PHD zinc finger"/>
    <property type="match status" value="1"/>
</dbReference>
<dbReference type="PROSITE" id="PS51184">
    <property type="entry name" value="JMJC"/>
    <property type="match status" value="1"/>
</dbReference>
<dbReference type="PROSITE" id="PS01359">
    <property type="entry name" value="ZF_PHD_1"/>
    <property type="match status" value="1"/>
</dbReference>
<dbReference type="PROSITE" id="PS50016">
    <property type="entry name" value="ZF_PHD_2"/>
    <property type="match status" value="1"/>
</dbReference>
<comment type="function">
    <text evidence="1 5 7 8">Lysine demethylase that demethylates both histones and non-histone proteins (PubMed:20129925, PubMed:21167174, PubMed:21532585). Enzymatically inactive by itself, and becomes active following phosphorylation by PKA: forms a complex with ARID5B and mediates demethylation of methylated ARID5B (PubMed:21532585). Demethylation of ARID5B leads to target the PHF2-ARID5B complex to target promoters, where PHF2 mediates demethylation of dimethylated 'Lys-9' of histone H3 (H3K9me2), followed by transcription activation of target genes (PubMed:21532585). The PHF2-ARID5B complex acts as a coactivator of HNF4A in liver. PHF2 is recruited to trimethylated 'Lys-4' of histone H3 (H3K4me3) at rDNA promoters and promotes expression of rDNA (PubMed:21532585). Involved in the activation of toll-like receptor 4 (TLR4)-target inflammatory genes in macrophages by catalyzing the demethylation of trimethylated histone H4 lysine 20 (H4K20me3) at the gene promoters (By similarity).</text>
</comment>
<comment type="catalytic activity">
    <reaction evidence="8">
        <text>N(6),N(6)-dimethyl-L-lysyl(9)-[histone H3] + 2-oxoglutarate + O2 = N(6)-methyl-L-lysyl(9)-[histone H3] + formaldehyde + succinate + CO2</text>
        <dbReference type="Rhea" id="RHEA:60192"/>
        <dbReference type="Rhea" id="RHEA-COMP:15541"/>
        <dbReference type="Rhea" id="RHEA-COMP:15542"/>
        <dbReference type="ChEBI" id="CHEBI:15379"/>
        <dbReference type="ChEBI" id="CHEBI:16526"/>
        <dbReference type="ChEBI" id="CHEBI:16810"/>
        <dbReference type="ChEBI" id="CHEBI:16842"/>
        <dbReference type="ChEBI" id="CHEBI:30031"/>
        <dbReference type="ChEBI" id="CHEBI:61929"/>
        <dbReference type="ChEBI" id="CHEBI:61976"/>
    </reaction>
    <physiologicalReaction direction="left-to-right" evidence="8">
        <dbReference type="Rhea" id="RHEA:60193"/>
    </physiologicalReaction>
</comment>
<comment type="activity regulation">
    <text>Enzymatically inactive by itself, and become active following phosphorylation by PKA.</text>
</comment>
<comment type="subunit">
    <text evidence="1 8">Component of the PHF2-ARID5B complex, at least composed of PHF2 and ARID5B (PubMed:21532585). Interacts with HNF4A and NR1H4 (PubMed:21532585). Interacts with RELA (By similarity).</text>
</comment>
<comment type="interaction">
    <interactant intactId="EBI-10972034">
        <id>O75151</id>
    </interactant>
    <interactant intactId="EBI-1056125">
        <id>Q16778</id>
        <label>H2BC21</label>
    </interactant>
    <organismsDiffer>false</organismsDiffer>
    <experiments>2</experiments>
</comment>
<comment type="interaction">
    <interactant intactId="EBI-10972034">
        <id>O75151</id>
    </interactant>
    <interactant intactId="EBI-1250177">
        <id>Q96RI1</id>
        <label>NR1H4</label>
    </interactant>
    <organismsDiffer>false</organismsDiffer>
    <experiments>2</experiments>
</comment>
<comment type="subcellular location">
    <subcellularLocation>
        <location evidence="5">Nucleus</location>
        <location evidence="5">Nucleolus</location>
    </subcellularLocation>
    <subcellularLocation>
        <location evidence="6">Chromosome</location>
        <location evidence="6">Centromere</location>
        <location evidence="6">Kinetochore</location>
    </subcellularLocation>
</comment>
<comment type="tissue specificity">
    <text evidence="8">Widely expressed, including in liver (at protein level).</text>
</comment>
<comment type="domain">
    <text evidence="5">The PHD-type zinc finger mediates the binding to H3K4me2 and H3K4me3.</text>
</comment>
<comment type="PTM">
    <text evidence="8">Phosphorylated by PKA on specific serine residues, leading to the formation of an active lysine demethylase complex.</text>
</comment>
<comment type="similarity">
    <text evidence="10">Belongs to the JHDM1 histone demethylase family. JHDM1D subfamily.</text>
</comment>
<comment type="caution">
    <text evidence="11">In contrast to the related histone demethylases JHDM1D and PHF8, the conserved active His in position 321 is replaced by a Tyr. However, the presence of a Tyr residue neither affects binding to the catalytic iron nor abolishes demethylase activity (PubMed:21167174).</text>
</comment>
<comment type="sequence caution" evidence="10">
    <conflict type="erroneous initiation">
        <sequence resource="EMBL-CDS" id="BAA31637"/>
    </conflict>
    <text>Extended N-terminus.</text>
</comment>